<feature type="chain" id="PRO_0000185646" description="Threonine synthase-like 1">
    <location>
        <begin position="1"/>
        <end position="743"/>
    </location>
</feature>
<feature type="modified residue" description="N6-acetyllysine" evidence="3">
    <location>
        <position position="281"/>
    </location>
</feature>
<feature type="modified residue" description="N6-(pyridoxal phosphate)lysine" evidence="1">
    <location>
        <position position="351"/>
    </location>
</feature>
<feature type="sequence variant" id="VAR_052545" description="In dbSNP:rs35827877.">
    <original>L</original>
    <variation>P</variation>
    <location>
        <position position="154"/>
    </location>
</feature>
<feature type="sequence variant" id="VAR_061893" description="In dbSNP:rs41279890.">
    <original>P</original>
    <variation>R</variation>
    <location>
        <position position="239"/>
    </location>
</feature>
<feature type="sequence variant" id="VAR_052546" description="In dbSNP:rs34929144.">
    <original>A</original>
    <variation>E</variation>
    <location>
        <position position="248"/>
    </location>
</feature>
<feature type="sequence variant" id="VAR_058869" description="In dbSNP:rs41279894.">
    <original>Q</original>
    <variation>R</variation>
    <location>
        <position position="399"/>
    </location>
</feature>
<feature type="sequence conflict" description="In Ref. 4; AAH35132." evidence="2" ref="4">
    <original>T</original>
    <variation>N</variation>
    <location>
        <position position="94"/>
    </location>
</feature>
<feature type="sequence conflict" description="In Ref. 4; AAH35132." evidence="2" ref="4">
    <original>H</original>
    <variation>R</variation>
    <location>
        <position position="705"/>
    </location>
</feature>
<comment type="cofactor">
    <cofactor evidence="1">
        <name>pyridoxal 5'-phosphate</name>
        <dbReference type="ChEBI" id="CHEBI:597326"/>
    </cofactor>
</comment>
<comment type="similarity">
    <text evidence="2">Belongs to the threonine synthase family.</text>
</comment>
<sequence length="743" mass="83070">MLHFNRCHHLKKITQKCFSSIHVKTDKHAQRFLSRTFALAELRKSWYSTHSLVGDKNIILMGPPGAGKTTVGRIIGQKLGCCVIDVDDDILEKTWNMSVSEKLQDVGNEQFLEEEGKAVLNFSASGSVISLTGSNPMHDASMWHLKKNGIIVYLDVPLLDLICRLKLMKTDRIVGQNSGTSMKDLLKFRRQYYKKWYDARVFCESGASPEEVADKVLNAIKRYQDVDSETFISTRHVWPEDCEQKVSAKFFSEAVIEGLASDGGLFVPAKEFPKLSCGEWKSLVGATYVERAQILLERCIHPADIPAARLGEMIETAYGENFACSKIAPVRHLSGNQFILELFHGPTGSFKDLSLQLMPHIFAHCIPPSCNYMILVATSGDTGSAVLNGFSRLNKNDKQRIAVVAFFPENGVSDFQKAQIIGSQRENGWAVGVESDFDFCQTAIKRIFNDSDFTGFLTVEYGTILSSANSINWGRLLPQVVYHASAYLDLVSQGFISFGSPVDVCIPTGNFGNILAAVYAKMMGIPIRKFICASNQNHVLTDFIKTGHYDLRERKLAQTFSPSIDILKSSNLERHLHLMANKDGQLMTELFNRLESQHHFQIEKALVEKLQQDFVADWCSEGECLAAINSTYNTSGYILDPHTAVAKVVADRVQDKTCPVIISSTAHYSKFAPAIMQALKIKEINETSSSQLYLLGSYNALPPLHEALLERTKQQEKMEYQVCAADMNVLKSHVEQLVQNQFI</sequence>
<accession>Q8IYQ7</accession>
<accession>B3KWL1</accession>
<accession>D3DRV3</accession>
<accession>Q5VV21</accession>
<dbReference type="EMBL" id="AK125249">
    <property type="protein sequence ID" value="BAG54173.1"/>
    <property type="molecule type" value="mRNA"/>
</dbReference>
<dbReference type="EMBL" id="AL512598">
    <property type="status" value="NOT_ANNOTATED_CDS"/>
    <property type="molecule type" value="Genomic_DNA"/>
</dbReference>
<dbReference type="EMBL" id="CH471072">
    <property type="protein sequence ID" value="EAW86113.1"/>
    <property type="molecule type" value="Genomic_DNA"/>
</dbReference>
<dbReference type="EMBL" id="CH471072">
    <property type="protein sequence ID" value="EAW86114.1"/>
    <property type="molecule type" value="Genomic_DNA"/>
</dbReference>
<dbReference type="EMBL" id="BC035132">
    <property type="protein sequence ID" value="AAH35132.1"/>
    <property type="molecule type" value="mRNA"/>
</dbReference>
<dbReference type="CCDS" id="CCDS7147.1"/>
<dbReference type="RefSeq" id="NP_079114.3">
    <property type="nucleotide sequence ID" value="NM_024838.4"/>
</dbReference>
<dbReference type="RefSeq" id="XP_005252654.1">
    <property type="nucleotide sequence ID" value="XM_005252597.4"/>
</dbReference>
<dbReference type="RefSeq" id="XP_016872154.1">
    <property type="nucleotide sequence ID" value="XM_017016665.2"/>
</dbReference>
<dbReference type="RefSeq" id="XP_047281720.1">
    <property type="nucleotide sequence ID" value="XM_047425764.1"/>
</dbReference>
<dbReference type="SMR" id="Q8IYQ7"/>
<dbReference type="BioGRID" id="122980">
    <property type="interactions" value="83"/>
</dbReference>
<dbReference type="FunCoup" id="Q8IYQ7">
    <property type="interactions" value="420"/>
</dbReference>
<dbReference type="IntAct" id="Q8IYQ7">
    <property type="interactions" value="48"/>
</dbReference>
<dbReference type="STRING" id="9606.ENSP00000434887"/>
<dbReference type="iPTMnet" id="Q8IYQ7"/>
<dbReference type="PhosphoSitePlus" id="Q8IYQ7"/>
<dbReference type="SwissPalm" id="Q8IYQ7"/>
<dbReference type="BioMuta" id="THNSL1"/>
<dbReference type="DMDM" id="62511212"/>
<dbReference type="jPOST" id="Q8IYQ7"/>
<dbReference type="MassIVE" id="Q8IYQ7"/>
<dbReference type="PaxDb" id="9606-ENSP00000434887"/>
<dbReference type="PeptideAtlas" id="Q8IYQ7"/>
<dbReference type="ProteomicsDB" id="71213"/>
<dbReference type="Pumba" id="Q8IYQ7"/>
<dbReference type="Antibodypedia" id="25872">
    <property type="antibodies" value="94 antibodies from 20 providers"/>
</dbReference>
<dbReference type="DNASU" id="79896"/>
<dbReference type="Ensembl" id="ENST00000376356.5">
    <property type="protein sequence ID" value="ENSP00000365534.4"/>
    <property type="gene ID" value="ENSG00000185875.13"/>
</dbReference>
<dbReference type="Ensembl" id="ENST00000524413.5">
    <property type="protein sequence ID" value="ENSP00000434887.1"/>
    <property type="gene ID" value="ENSG00000185875.13"/>
</dbReference>
<dbReference type="GeneID" id="79896"/>
<dbReference type="KEGG" id="hsa:79896"/>
<dbReference type="MANE-Select" id="ENST00000376356.5">
    <property type="protein sequence ID" value="ENSP00000365534.4"/>
    <property type="RefSeq nucleotide sequence ID" value="NM_024838.5"/>
    <property type="RefSeq protein sequence ID" value="NP_079114.3"/>
</dbReference>
<dbReference type="UCSC" id="uc001isi.6">
    <property type="organism name" value="human"/>
</dbReference>
<dbReference type="AGR" id="HGNC:26160"/>
<dbReference type="CTD" id="79896"/>
<dbReference type="GeneCards" id="THNSL1"/>
<dbReference type="HGNC" id="HGNC:26160">
    <property type="gene designation" value="THNSL1"/>
</dbReference>
<dbReference type="HPA" id="ENSG00000185875">
    <property type="expression patterns" value="Tissue enhanced (liver)"/>
</dbReference>
<dbReference type="MIM" id="611260">
    <property type="type" value="gene"/>
</dbReference>
<dbReference type="neXtProt" id="NX_Q8IYQ7"/>
<dbReference type="OpenTargets" id="ENSG00000185875"/>
<dbReference type="PharmGKB" id="PA134906927"/>
<dbReference type="VEuPathDB" id="HostDB:ENSG00000185875"/>
<dbReference type="eggNOG" id="KOG2616">
    <property type="taxonomic scope" value="Eukaryota"/>
</dbReference>
<dbReference type="GeneTree" id="ENSGT00940000161144"/>
<dbReference type="HOGENOM" id="CLU_015170_3_2_1"/>
<dbReference type="InParanoid" id="Q8IYQ7"/>
<dbReference type="OMA" id="HFNRCQH"/>
<dbReference type="OrthoDB" id="5203861at2759"/>
<dbReference type="PAN-GO" id="Q8IYQ7">
    <property type="GO annotations" value="1 GO annotation based on evolutionary models"/>
</dbReference>
<dbReference type="PhylomeDB" id="Q8IYQ7"/>
<dbReference type="TreeFam" id="TF329641"/>
<dbReference type="PathwayCommons" id="Q8IYQ7"/>
<dbReference type="SignaLink" id="Q8IYQ7"/>
<dbReference type="BioGRID-ORCS" id="79896">
    <property type="hits" value="7 hits in 1156 CRISPR screens"/>
</dbReference>
<dbReference type="ChiTaRS" id="THNSL1">
    <property type="organism name" value="human"/>
</dbReference>
<dbReference type="GenomeRNAi" id="79896"/>
<dbReference type="Pharos" id="Q8IYQ7">
    <property type="development level" value="Tdark"/>
</dbReference>
<dbReference type="PRO" id="PR:Q8IYQ7"/>
<dbReference type="Proteomes" id="UP000005640">
    <property type="component" value="Chromosome 10"/>
</dbReference>
<dbReference type="RNAct" id="Q8IYQ7">
    <property type="molecule type" value="protein"/>
</dbReference>
<dbReference type="Bgee" id="ENSG00000185875">
    <property type="expression patterns" value="Expressed in secondary oocyte and 145 other cell types or tissues"/>
</dbReference>
<dbReference type="GO" id="GO:0005737">
    <property type="term" value="C:cytoplasm"/>
    <property type="evidence" value="ECO:0000318"/>
    <property type="project" value="GO_Central"/>
</dbReference>
<dbReference type="GO" id="GO:0005739">
    <property type="term" value="C:mitochondrion"/>
    <property type="evidence" value="ECO:0006056"/>
    <property type="project" value="FlyBase"/>
</dbReference>
<dbReference type="CDD" id="cd00464">
    <property type="entry name" value="SK"/>
    <property type="match status" value="1"/>
</dbReference>
<dbReference type="CDD" id="cd01560">
    <property type="entry name" value="Thr-synth_2"/>
    <property type="match status" value="1"/>
</dbReference>
<dbReference type="Gene3D" id="3.40.50.1100">
    <property type="match status" value="2"/>
</dbReference>
<dbReference type="Gene3D" id="3.40.50.300">
    <property type="entry name" value="P-loop containing nucleotide triphosphate hydrolases"/>
    <property type="match status" value="1"/>
</dbReference>
<dbReference type="Gene3D" id="3.90.1380.10">
    <property type="entry name" value="Threonine synthase, N-terminal domain"/>
    <property type="match status" value="1"/>
</dbReference>
<dbReference type="HAMAP" id="MF_00109">
    <property type="entry name" value="Shikimate_kinase"/>
    <property type="match status" value="1"/>
</dbReference>
<dbReference type="InterPro" id="IPR027417">
    <property type="entry name" value="P-loop_NTPase"/>
</dbReference>
<dbReference type="InterPro" id="IPR031322">
    <property type="entry name" value="Shikimate/glucono_kinase"/>
</dbReference>
<dbReference type="InterPro" id="IPR000623">
    <property type="entry name" value="Shikimate_kinase/TSH1"/>
</dbReference>
<dbReference type="InterPro" id="IPR029144">
    <property type="entry name" value="Thr_synth_N"/>
</dbReference>
<dbReference type="InterPro" id="IPR037158">
    <property type="entry name" value="Thr_synth_N_sf"/>
</dbReference>
<dbReference type="InterPro" id="IPR004450">
    <property type="entry name" value="Thr_synthase-like"/>
</dbReference>
<dbReference type="InterPro" id="IPR036052">
    <property type="entry name" value="TrpB-like_PALP_sf"/>
</dbReference>
<dbReference type="NCBIfam" id="TIGR00260">
    <property type="entry name" value="thrC"/>
    <property type="match status" value="1"/>
</dbReference>
<dbReference type="PANTHER" id="PTHR43515">
    <property type="entry name" value="THREONINE SYNTHASE-LIKE 1"/>
    <property type="match status" value="1"/>
</dbReference>
<dbReference type="PANTHER" id="PTHR43515:SF1">
    <property type="entry name" value="THREONINE SYNTHASE-LIKE 1"/>
    <property type="match status" value="1"/>
</dbReference>
<dbReference type="Pfam" id="PF01202">
    <property type="entry name" value="SKI"/>
    <property type="match status" value="1"/>
</dbReference>
<dbReference type="Pfam" id="PF14821">
    <property type="entry name" value="Thr_synth_N"/>
    <property type="match status" value="1"/>
</dbReference>
<dbReference type="PRINTS" id="PR01100">
    <property type="entry name" value="SHIKIMTKNASE"/>
</dbReference>
<dbReference type="SUPFAM" id="SSF52540">
    <property type="entry name" value="P-loop containing nucleoside triphosphate hydrolases"/>
    <property type="match status" value="1"/>
</dbReference>
<dbReference type="SUPFAM" id="SSF53686">
    <property type="entry name" value="Tryptophan synthase beta subunit-like PLP-dependent enzymes"/>
    <property type="match status" value="1"/>
</dbReference>
<evidence type="ECO:0000250" key="1"/>
<evidence type="ECO:0000305" key="2"/>
<evidence type="ECO:0007744" key="3">
    <source>
    </source>
</evidence>
<proteinExistence type="evidence at protein level"/>
<organism>
    <name type="scientific">Homo sapiens</name>
    <name type="common">Human</name>
    <dbReference type="NCBI Taxonomy" id="9606"/>
    <lineage>
        <taxon>Eukaryota</taxon>
        <taxon>Metazoa</taxon>
        <taxon>Chordata</taxon>
        <taxon>Craniata</taxon>
        <taxon>Vertebrata</taxon>
        <taxon>Euteleostomi</taxon>
        <taxon>Mammalia</taxon>
        <taxon>Eutheria</taxon>
        <taxon>Euarchontoglires</taxon>
        <taxon>Primates</taxon>
        <taxon>Haplorrhini</taxon>
        <taxon>Catarrhini</taxon>
        <taxon>Hominidae</taxon>
        <taxon>Homo</taxon>
    </lineage>
</organism>
<gene>
    <name type="primary">THNSL1</name>
</gene>
<protein>
    <recommendedName>
        <fullName>Threonine synthase-like 1</fullName>
        <shortName>TSH1</shortName>
    </recommendedName>
</protein>
<name>THNS1_HUMAN</name>
<keyword id="KW-0007">Acetylation</keyword>
<keyword id="KW-1267">Proteomics identification</keyword>
<keyword id="KW-0663">Pyridoxal phosphate</keyword>
<keyword id="KW-1185">Reference proteome</keyword>
<reference key="1">
    <citation type="journal article" date="2004" name="Nat. Genet.">
        <title>Complete sequencing and characterization of 21,243 full-length human cDNAs.</title>
        <authorList>
            <person name="Ota T."/>
            <person name="Suzuki Y."/>
            <person name="Nishikawa T."/>
            <person name="Otsuki T."/>
            <person name="Sugiyama T."/>
            <person name="Irie R."/>
            <person name="Wakamatsu A."/>
            <person name="Hayashi K."/>
            <person name="Sato H."/>
            <person name="Nagai K."/>
            <person name="Kimura K."/>
            <person name="Makita H."/>
            <person name="Sekine M."/>
            <person name="Obayashi M."/>
            <person name="Nishi T."/>
            <person name="Shibahara T."/>
            <person name="Tanaka T."/>
            <person name="Ishii S."/>
            <person name="Yamamoto J."/>
            <person name="Saito K."/>
            <person name="Kawai Y."/>
            <person name="Isono Y."/>
            <person name="Nakamura Y."/>
            <person name="Nagahari K."/>
            <person name="Murakami K."/>
            <person name="Yasuda T."/>
            <person name="Iwayanagi T."/>
            <person name="Wagatsuma M."/>
            <person name="Shiratori A."/>
            <person name="Sudo H."/>
            <person name="Hosoiri T."/>
            <person name="Kaku Y."/>
            <person name="Kodaira H."/>
            <person name="Kondo H."/>
            <person name="Sugawara M."/>
            <person name="Takahashi M."/>
            <person name="Kanda K."/>
            <person name="Yokoi T."/>
            <person name="Furuya T."/>
            <person name="Kikkawa E."/>
            <person name="Omura Y."/>
            <person name="Abe K."/>
            <person name="Kamihara K."/>
            <person name="Katsuta N."/>
            <person name="Sato K."/>
            <person name="Tanikawa M."/>
            <person name="Yamazaki M."/>
            <person name="Ninomiya K."/>
            <person name="Ishibashi T."/>
            <person name="Yamashita H."/>
            <person name="Murakawa K."/>
            <person name="Fujimori K."/>
            <person name="Tanai H."/>
            <person name="Kimata M."/>
            <person name="Watanabe M."/>
            <person name="Hiraoka S."/>
            <person name="Chiba Y."/>
            <person name="Ishida S."/>
            <person name="Ono Y."/>
            <person name="Takiguchi S."/>
            <person name="Watanabe S."/>
            <person name="Yosida M."/>
            <person name="Hotuta T."/>
            <person name="Kusano J."/>
            <person name="Kanehori K."/>
            <person name="Takahashi-Fujii A."/>
            <person name="Hara H."/>
            <person name="Tanase T.-O."/>
            <person name="Nomura Y."/>
            <person name="Togiya S."/>
            <person name="Komai F."/>
            <person name="Hara R."/>
            <person name="Takeuchi K."/>
            <person name="Arita M."/>
            <person name="Imose N."/>
            <person name="Musashino K."/>
            <person name="Yuuki H."/>
            <person name="Oshima A."/>
            <person name="Sasaki N."/>
            <person name="Aotsuka S."/>
            <person name="Yoshikawa Y."/>
            <person name="Matsunawa H."/>
            <person name="Ichihara T."/>
            <person name="Shiohata N."/>
            <person name="Sano S."/>
            <person name="Moriya S."/>
            <person name="Momiyama H."/>
            <person name="Satoh N."/>
            <person name="Takami S."/>
            <person name="Terashima Y."/>
            <person name="Suzuki O."/>
            <person name="Nakagawa S."/>
            <person name="Senoh A."/>
            <person name="Mizoguchi H."/>
            <person name="Goto Y."/>
            <person name="Shimizu F."/>
            <person name="Wakebe H."/>
            <person name="Hishigaki H."/>
            <person name="Watanabe T."/>
            <person name="Sugiyama A."/>
            <person name="Takemoto M."/>
            <person name="Kawakami B."/>
            <person name="Yamazaki M."/>
            <person name="Watanabe K."/>
            <person name="Kumagai A."/>
            <person name="Itakura S."/>
            <person name="Fukuzumi Y."/>
            <person name="Fujimori Y."/>
            <person name="Komiyama M."/>
            <person name="Tashiro H."/>
            <person name="Tanigami A."/>
            <person name="Fujiwara T."/>
            <person name="Ono T."/>
            <person name="Yamada K."/>
            <person name="Fujii Y."/>
            <person name="Ozaki K."/>
            <person name="Hirao M."/>
            <person name="Ohmori Y."/>
            <person name="Kawabata A."/>
            <person name="Hikiji T."/>
            <person name="Kobatake N."/>
            <person name="Inagaki H."/>
            <person name="Ikema Y."/>
            <person name="Okamoto S."/>
            <person name="Okitani R."/>
            <person name="Kawakami T."/>
            <person name="Noguchi S."/>
            <person name="Itoh T."/>
            <person name="Shigeta K."/>
            <person name="Senba T."/>
            <person name="Matsumura K."/>
            <person name="Nakajima Y."/>
            <person name="Mizuno T."/>
            <person name="Morinaga M."/>
            <person name="Sasaki M."/>
            <person name="Togashi T."/>
            <person name="Oyama M."/>
            <person name="Hata H."/>
            <person name="Watanabe M."/>
            <person name="Komatsu T."/>
            <person name="Mizushima-Sugano J."/>
            <person name="Satoh T."/>
            <person name="Shirai Y."/>
            <person name="Takahashi Y."/>
            <person name="Nakagawa K."/>
            <person name="Okumura K."/>
            <person name="Nagase T."/>
            <person name="Nomura N."/>
            <person name="Kikuchi H."/>
            <person name="Masuho Y."/>
            <person name="Yamashita R."/>
            <person name="Nakai K."/>
            <person name="Yada T."/>
            <person name="Nakamura Y."/>
            <person name="Ohara O."/>
            <person name="Isogai T."/>
            <person name="Sugano S."/>
        </authorList>
    </citation>
    <scope>NUCLEOTIDE SEQUENCE [LARGE SCALE MRNA]</scope>
</reference>
<reference key="2">
    <citation type="journal article" date="2004" name="Nature">
        <title>The DNA sequence and comparative analysis of human chromosome 10.</title>
        <authorList>
            <person name="Deloukas P."/>
            <person name="Earthrowl M.E."/>
            <person name="Grafham D.V."/>
            <person name="Rubenfield M."/>
            <person name="French L."/>
            <person name="Steward C.A."/>
            <person name="Sims S.K."/>
            <person name="Jones M.C."/>
            <person name="Searle S."/>
            <person name="Scott C."/>
            <person name="Howe K."/>
            <person name="Hunt S.E."/>
            <person name="Andrews T.D."/>
            <person name="Gilbert J.G.R."/>
            <person name="Swarbreck D."/>
            <person name="Ashurst J.L."/>
            <person name="Taylor A."/>
            <person name="Battles J."/>
            <person name="Bird C.P."/>
            <person name="Ainscough R."/>
            <person name="Almeida J.P."/>
            <person name="Ashwell R.I.S."/>
            <person name="Ambrose K.D."/>
            <person name="Babbage A.K."/>
            <person name="Bagguley C.L."/>
            <person name="Bailey J."/>
            <person name="Banerjee R."/>
            <person name="Bates K."/>
            <person name="Beasley H."/>
            <person name="Bray-Allen S."/>
            <person name="Brown A.J."/>
            <person name="Brown J.Y."/>
            <person name="Burford D.C."/>
            <person name="Burrill W."/>
            <person name="Burton J."/>
            <person name="Cahill P."/>
            <person name="Camire D."/>
            <person name="Carter N.P."/>
            <person name="Chapman J.C."/>
            <person name="Clark S.Y."/>
            <person name="Clarke G."/>
            <person name="Clee C.M."/>
            <person name="Clegg S."/>
            <person name="Corby N."/>
            <person name="Coulson A."/>
            <person name="Dhami P."/>
            <person name="Dutta I."/>
            <person name="Dunn M."/>
            <person name="Faulkner L."/>
            <person name="Frankish A."/>
            <person name="Frankland J.A."/>
            <person name="Garner P."/>
            <person name="Garnett J."/>
            <person name="Gribble S."/>
            <person name="Griffiths C."/>
            <person name="Grocock R."/>
            <person name="Gustafson E."/>
            <person name="Hammond S."/>
            <person name="Harley J.L."/>
            <person name="Hart E."/>
            <person name="Heath P.D."/>
            <person name="Ho T.P."/>
            <person name="Hopkins B."/>
            <person name="Horne J."/>
            <person name="Howden P.J."/>
            <person name="Huckle E."/>
            <person name="Hynds C."/>
            <person name="Johnson C."/>
            <person name="Johnson D."/>
            <person name="Kana A."/>
            <person name="Kay M."/>
            <person name="Kimberley A.M."/>
            <person name="Kershaw J.K."/>
            <person name="Kokkinaki M."/>
            <person name="Laird G.K."/>
            <person name="Lawlor S."/>
            <person name="Lee H.M."/>
            <person name="Leongamornlert D.A."/>
            <person name="Laird G."/>
            <person name="Lloyd C."/>
            <person name="Lloyd D.M."/>
            <person name="Loveland J."/>
            <person name="Lovell J."/>
            <person name="McLaren S."/>
            <person name="McLay K.E."/>
            <person name="McMurray A."/>
            <person name="Mashreghi-Mohammadi M."/>
            <person name="Matthews L."/>
            <person name="Milne S."/>
            <person name="Nickerson T."/>
            <person name="Nguyen M."/>
            <person name="Overton-Larty E."/>
            <person name="Palmer S.A."/>
            <person name="Pearce A.V."/>
            <person name="Peck A.I."/>
            <person name="Pelan S."/>
            <person name="Phillimore B."/>
            <person name="Porter K."/>
            <person name="Rice C.M."/>
            <person name="Rogosin A."/>
            <person name="Ross M.T."/>
            <person name="Sarafidou T."/>
            <person name="Sehra H.K."/>
            <person name="Shownkeen R."/>
            <person name="Skuce C.D."/>
            <person name="Smith M."/>
            <person name="Standring L."/>
            <person name="Sycamore N."/>
            <person name="Tester J."/>
            <person name="Thorpe A."/>
            <person name="Torcasso W."/>
            <person name="Tracey A."/>
            <person name="Tromans A."/>
            <person name="Tsolas J."/>
            <person name="Wall M."/>
            <person name="Walsh J."/>
            <person name="Wang H."/>
            <person name="Weinstock K."/>
            <person name="West A.P."/>
            <person name="Willey D.L."/>
            <person name="Whitehead S.L."/>
            <person name="Wilming L."/>
            <person name="Wray P.W."/>
            <person name="Young L."/>
            <person name="Chen Y."/>
            <person name="Lovering R.C."/>
            <person name="Moschonas N.K."/>
            <person name="Siebert R."/>
            <person name="Fechtel K."/>
            <person name="Bentley D."/>
            <person name="Durbin R.M."/>
            <person name="Hubbard T."/>
            <person name="Doucette-Stamm L."/>
            <person name="Beck S."/>
            <person name="Smith D.R."/>
            <person name="Rogers J."/>
        </authorList>
    </citation>
    <scope>NUCLEOTIDE SEQUENCE [LARGE SCALE GENOMIC DNA]</scope>
</reference>
<reference key="3">
    <citation type="submission" date="2005-09" db="EMBL/GenBank/DDBJ databases">
        <authorList>
            <person name="Mural R.J."/>
            <person name="Istrail S."/>
            <person name="Sutton G.G."/>
            <person name="Florea L."/>
            <person name="Halpern A.L."/>
            <person name="Mobarry C.M."/>
            <person name="Lippert R."/>
            <person name="Walenz B."/>
            <person name="Shatkay H."/>
            <person name="Dew I."/>
            <person name="Miller J.R."/>
            <person name="Flanigan M.J."/>
            <person name="Edwards N.J."/>
            <person name="Bolanos R."/>
            <person name="Fasulo D."/>
            <person name="Halldorsson B.V."/>
            <person name="Hannenhalli S."/>
            <person name="Turner R."/>
            <person name="Yooseph S."/>
            <person name="Lu F."/>
            <person name="Nusskern D.R."/>
            <person name="Shue B.C."/>
            <person name="Zheng X.H."/>
            <person name="Zhong F."/>
            <person name="Delcher A.L."/>
            <person name="Huson D.H."/>
            <person name="Kravitz S.A."/>
            <person name="Mouchard L."/>
            <person name="Reinert K."/>
            <person name="Remington K.A."/>
            <person name="Clark A.G."/>
            <person name="Waterman M.S."/>
            <person name="Eichler E.E."/>
            <person name="Adams M.D."/>
            <person name="Hunkapiller M.W."/>
            <person name="Myers E.W."/>
            <person name="Venter J.C."/>
        </authorList>
    </citation>
    <scope>NUCLEOTIDE SEQUENCE [LARGE SCALE GENOMIC DNA]</scope>
</reference>
<reference key="4">
    <citation type="journal article" date="2004" name="Genome Res.">
        <title>The status, quality, and expansion of the NIH full-length cDNA project: the Mammalian Gene Collection (MGC).</title>
        <authorList>
            <consortium name="The MGC Project Team"/>
        </authorList>
    </citation>
    <scope>NUCLEOTIDE SEQUENCE [LARGE SCALE MRNA]</scope>
    <source>
        <tissue>Brain</tissue>
    </source>
</reference>
<reference key="5">
    <citation type="journal article" date="2009" name="Science">
        <title>Lysine acetylation targets protein complexes and co-regulates major cellular functions.</title>
        <authorList>
            <person name="Choudhary C."/>
            <person name="Kumar C."/>
            <person name="Gnad F."/>
            <person name="Nielsen M.L."/>
            <person name="Rehman M."/>
            <person name="Walther T.C."/>
            <person name="Olsen J.V."/>
            <person name="Mann M."/>
        </authorList>
    </citation>
    <scope>ACETYLATION [LARGE SCALE ANALYSIS] AT LYS-281</scope>
    <scope>IDENTIFICATION BY MASS SPECTROMETRY [LARGE SCALE ANALYSIS]</scope>
</reference>
<reference key="6">
    <citation type="journal article" date="2014" name="J. Proteomics">
        <title>An enzyme assisted RP-RPLC approach for in-depth analysis of human liver phosphoproteome.</title>
        <authorList>
            <person name="Bian Y."/>
            <person name="Song C."/>
            <person name="Cheng K."/>
            <person name="Dong M."/>
            <person name="Wang F."/>
            <person name="Huang J."/>
            <person name="Sun D."/>
            <person name="Wang L."/>
            <person name="Ye M."/>
            <person name="Zou H."/>
        </authorList>
    </citation>
    <scope>IDENTIFICATION BY MASS SPECTROMETRY [LARGE SCALE ANALYSIS]</scope>
    <source>
        <tissue>Liver</tissue>
    </source>
</reference>